<feature type="chain" id="PRO_0000324939" description="Leucine aminopeptidase 2-2">
    <location>
        <begin position="1"/>
        <end position="635"/>
    </location>
</feature>
<feature type="active site" description="Proton acceptor" evidence="3">
    <location>
        <position position="295"/>
    </location>
</feature>
<feature type="active site" description="Proton donor" evidence="3">
    <location>
        <position position="399"/>
    </location>
</feature>
<feature type="binding site" evidence="1">
    <location>
        <begin position="141"/>
        <end position="143"/>
    </location>
    <ligand>
        <name>substrate</name>
    </ligand>
</feature>
<feature type="binding site" evidence="1">
    <location>
        <begin position="265"/>
        <end position="270"/>
    </location>
    <ligand>
        <name>substrate</name>
    </ligand>
</feature>
<feature type="binding site" evidence="3">
    <location>
        <position position="294"/>
    </location>
    <ligand>
        <name>Zn(2+)</name>
        <dbReference type="ChEBI" id="CHEBI:29105"/>
        <note>catalytic</note>
    </ligand>
</feature>
<feature type="binding site" evidence="3">
    <location>
        <position position="298"/>
    </location>
    <ligand>
        <name>Zn(2+)</name>
        <dbReference type="ChEBI" id="CHEBI:29105"/>
        <note>catalytic</note>
    </ligand>
</feature>
<feature type="binding site" evidence="3">
    <location>
        <position position="317"/>
    </location>
    <ligand>
        <name>Zn(2+)</name>
        <dbReference type="ChEBI" id="CHEBI:29105"/>
        <note>catalytic</note>
    </ligand>
</feature>
<dbReference type="EC" id="3.4.11.-"/>
<dbReference type="EC" id="3.3.2.10"/>
<dbReference type="EMBL" id="CP000496">
    <property type="protein sequence ID" value="ABN64689.2"/>
    <property type="molecule type" value="Genomic_DNA"/>
</dbReference>
<dbReference type="RefSeq" id="XP_001382718.2">
    <property type="nucleotide sequence ID" value="XM_001382681.1"/>
</dbReference>
<dbReference type="SMR" id="A3LQI7"/>
<dbReference type="FunCoup" id="A3LQI7">
    <property type="interactions" value="1089"/>
</dbReference>
<dbReference type="STRING" id="322104.A3LQI7"/>
<dbReference type="MEROPS" id="M01.034"/>
<dbReference type="GeneID" id="4837028"/>
<dbReference type="KEGG" id="pic:PICST_82220"/>
<dbReference type="eggNOG" id="KOG1047">
    <property type="taxonomic scope" value="Eukaryota"/>
</dbReference>
<dbReference type="HOGENOM" id="CLU_014505_1_1_1"/>
<dbReference type="InParanoid" id="A3LQI7"/>
<dbReference type="OMA" id="CTALQWM"/>
<dbReference type="OrthoDB" id="79562at2759"/>
<dbReference type="Proteomes" id="UP000002258">
    <property type="component" value="Chromosome 2"/>
</dbReference>
<dbReference type="GO" id="GO:0005829">
    <property type="term" value="C:cytosol"/>
    <property type="evidence" value="ECO:0007669"/>
    <property type="project" value="TreeGrafter"/>
</dbReference>
<dbReference type="GO" id="GO:0005634">
    <property type="term" value="C:nucleus"/>
    <property type="evidence" value="ECO:0007669"/>
    <property type="project" value="UniProtKB-SubCell"/>
</dbReference>
<dbReference type="GO" id="GO:0004177">
    <property type="term" value="F:aminopeptidase activity"/>
    <property type="evidence" value="ECO:0000250"/>
    <property type="project" value="UniProtKB"/>
</dbReference>
<dbReference type="GO" id="GO:0004301">
    <property type="term" value="F:epoxide hydrolase activity"/>
    <property type="evidence" value="ECO:0000250"/>
    <property type="project" value="UniProtKB"/>
</dbReference>
<dbReference type="GO" id="GO:0008237">
    <property type="term" value="F:metallopeptidase activity"/>
    <property type="evidence" value="ECO:0007669"/>
    <property type="project" value="UniProtKB-KW"/>
</dbReference>
<dbReference type="GO" id="GO:0008270">
    <property type="term" value="F:zinc ion binding"/>
    <property type="evidence" value="ECO:0000250"/>
    <property type="project" value="UniProtKB"/>
</dbReference>
<dbReference type="GO" id="GO:0043171">
    <property type="term" value="P:peptide catabolic process"/>
    <property type="evidence" value="ECO:0000250"/>
    <property type="project" value="UniProtKB"/>
</dbReference>
<dbReference type="GO" id="GO:0006508">
    <property type="term" value="P:proteolysis"/>
    <property type="evidence" value="ECO:0007669"/>
    <property type="project" value="UniProtKB-KW"/>
</dbReference>
<dbReference type="CDD" id="cd09599">
    <property type="entry name" value="M1_LTA4H"/>
    <property type="match status" value="1"/>
</dbReference>
<dbReference type="FunFam" id="1.10.390.10:FF:000009">
    <property type="entry name" value="Leukotriene A(4) hydrolase"/>
    <property type="match status" value="1"/>
</dbReference>
<dbReference type="FunFam" id="1.25.40.320:FF:000001">
    <property type="entry name" value="Leukotriene A(4) hydrolase"/>
    <property type="match status" value="1"/>
</dbReference>
<dbReference type="FunFam" id="2.60.40.1730:FF:000004">
    <property type="entry name" value="Leukotriene A(4) hydrolase"/>
    <property type="match status" value="1"/>
</dbReference>
<dbReference type="FunFam" id="3.30.2010.30:FF:000001">
    <property type="entry name" value="Leukotriene A(4) hydrolase"/>
    <property type="match status" value="1"/>
</dbReference>
<dbReference type="Gene3D" id="3.30.2010.30">
    <property type="match status" value="1"/>
</dbReference>
<dbReference type="Gene3D" id="1.10.390.10">
    <property type="entry name" value="Neutral Protease Domain 2"/>
    <property type="match status" value="1"/>
</dbReference>
<dbReference type="Gene3D" id="1.25.40.320">
    <property type="entry name" value="Peptidase M1, leukotriene A4 hydrolase/aminopeptidase C-terminal domain"/>
    <property type="match status" value="1"/>
</dbReference>
<dbReference type="Gene3D" id="2.60.40.1730">
    <property type="entry name" value="tricorn interacting facor f3 domain"/>
    <property type="match status" value="1"/>
</dbReference>
<dbReference type="InterPro" id="IPR045357">
    <property type="entry name" value="Aminopeptidase_N-like_N"/>
</dbReference>
<dbReference type="InterPro" id="IPR042097">
    <property type="entry name" value="Aminopeptidase_N-like_N_sf"/>
</dbReference>
<dbReference type="InterPro" id="IPR016024">
    <property type="entry name" value="ARM-type_fold"/>
</dbReference>
<dbReference type="InterPro" id="IPR012777">
    <property type="entry name" value="LTA4H"/>
</dbReference>
<dbReference type="InterPro" id="IPR049980">
    <property type="entry name" value="LTA4H_cat"/>
</dbReference>
<dbReference type="InterPro" id="IPR038502">
    <property type="entry name" value="M1_LTA-4_hydro/amino_C_sf"/>
</dbReference>
<dbReference type="InterPro" id="IPR034015">
    <property type="entry name" value="M1_LTA4H"/>
</dbReference>
<dbReference type="InterPro" id="IPR001930">
    <property type="entry name" value="Peptidase_M1"/>
</dbReference>
<dbReference type="InterPro" id="IPR015211">
    <property type="entry name" value="Peptidase_M1_C"/>
</dbReference>
<dbReference type="InterPro" id="IPR014782">
    <property type="entry name" value="Peptidase_M1_dom"/>
</dbReference>
<dbReference type="InterPro" id="IPR027268">
    <property type="entry name" value="Peptidase_M4/M1_CTD_sf"/>
</dbReference>
<dbReference type="NCBIfam" id="TIGR02411">
    <property type="entry name" value="leuko_A4_hydro"/>
    <property type="match status" value="1"/>
</dbReference>
<dbReference type="PANTHER" id="PTHR45726">
    <property type="entry name" value="LEUKOTRIENE A-4 HYDROLASE"/>
    <property type="match status" value="1"/>
</dbReference>
<dbReference type="PANTHER" id="PTHR45726:SF3">
    <property type="entry name" value="LEUKOTRIENE A-4 HYDROLASE"/>
    <property type="match status" value="1"/>
</dbReference>
<dbReference type="Pfam" id="PF09127">
    <property type="entry name" value="Leuk-A4-hydro_C"/>
    <property type="match status" value="1"/>
</dbReference>
<dbReference type="Pfam" id="PF01433">
    <property type="entry name" value="Peptidase_M1"/>
    <property type="match status" value="1"/>
</dbReference>
<dbReference type="Pfam" id="PF17900">
    <property type="entry name" value="Peptidase_M1_N"/>
    <property type="match status" value="1"/>
</dbReference>
<dbReference type="PRINTS" id="PR00756">
    <property type="entry name" value="ALADIPTASE"/>
</dbReference>
<dbReference type="SMART" id="SM01263">
    <property type="entry name" value="Leuk-A4-hydro_C"/>
    <property type="match status" value="1"/>
</dbReference>
<dbReference type="SUPFAM" id="SSF48371">
    <property type="entry name" value="ARM repeat"/>
    <property type="match status" value="1"/>
</dbReference>
<dbReference type="SUPFAM" id="SSF63737">
    <property type="entry name" value="Leukotriene A4 hydrolase N-terminal domain"/>
    <property type="match status" value="1"/>
</dbReference>
<dbReference type="SUPFAM" id="SSF55486">
    <property type="entry name" value="Metalloproteases ('zincins'), catalytic domain"/>
    <property type="match status" value="1"/>
</dbReference>
<dbReference type="PROSITE" id="PS00142">
    <property type="entry name" value="ZINC_PROTEASE"/>
    <property type="match status" value="1"/>
</dbReference>
<gene>
    <name type="primary">LTA4</name>
    <name type="ORF">PICST_82220</name>
</gene>
<reference key="1">
    <citation type="journal article" date="2007" name="Nat. Biotechnol.">
        <title>Genome sequence of the lignocellulose-bioconverting and xylose-fermenting yeast Pichia stipitis.</title>
        <authorList>
            <person name="Jeffries T.W."/>
            <person name="Grigoriev I.V."/>
            <person name="Grimwood J."/>
            <person name="Laplaza J.M."/>
            <person name="Aerts A."/>
            <person name="Salamov A."/>
            <person name="Schmutz J."/>
            <person name="Lindquist E."/>
            <person name="Dehal P."/>
            <person name="Shapiro H."/>
            <person name="Jin Y.-S."/>
            <person name="Passoth V."/>
            <person name="Richardson P.M."/>
        </authorList>
    </citation>
    <scope>NUCLEOTIDE SEQUENCE [LARGE SCALE GENOMIC DNA]</scope>
    <source>
        <strain>ATCC 58785 / CBS 6054 / NBRC 10063 / NRRL Y-11545</strain>
    </source>
</reference>
<comment type="function">
    <text evidence="2">Aminopeptidase that preferentially cleaves di- and tripeptides. Also has low epoxide hydrolase activity (in vitro). Can hydrolyze the epoxide leukotriene LTA(4) but it forms preferentially 5,6-dihydroxy-7,9,11,14-eicosatetraenoic acid rather than the cytokine leukotriene B(4) as the product compared to the homologous mammalian enzyme (in vitro).</text>
</comment>
<comment type="catalytic activity">
    <reaction evidence="2">
        <text>an epoxide + H2O = an ethanediol</text>
        <dbReference type="Rhea" id="RHEA:19037"/>
        <dbReference type="ChEBI" id="CHEBI:15377"/>
        <dbReference type="ChEBI" id="CHEBI:32955"/>
        <dbReference type="ChEBI" id="CHEBI:140594"/>
        <dbReference type="EC" id="3.3.2.10"/>
    </reaction>
</comment>
<comment type="cofactor">
    <cofactor evidence="2">
        <name>Zn(2+)</name>
        <dbReference type="ChEBI" id="CHEBI:29105"/>
    </cofactor>
    <text evidence="2">Binds 1 zinc ion per subunit.</text>
</comment>
<comment type="subcellular location">
    <subcellularLocation>
        <location evidence="2">Cytoplasm</location>
    </subcellularLocation>
    <subcellularLocation>
        <location evidence="2">Nucleus</location>
    </subcellularLocation>
</comment>
<comment type="similarity">
    <text evidence="4">Belongs to the peptidase M1 family.</text>
</comment>
<organism>
    <name type="scientific">Scheffersomyces stipitis (strain ATCC 58785 / CBS 6054 / NBRC 10063 / NRRL Y-11545)</name>
    <name type="common">Yeast</name>
    <name type="synonym">Pichia stipitis</name>
    <dbReference type="NCBI Taxonomy" id="322104"/>
    <lineage>
        <taxon>Eukaryota</taxon>
        <taxon>Fungi</taxon>
        <taxon>Dikarya</taxon>
        <taxon>Ascomycota</taxon>
        <taxon>Saccharomycotina</taxon>
        <taxon>Pichiomycetes</taxon>
        <taxon>Debaryomycetaceae</taxon>
        <taxon>Scheffersomyces</taxon>
    </lineage>
</organism>
<protein>
    <recommendedName>
        <fullName>Leucine aminopeptidase 2-2</fullName>
        <ecNumber>3.4.11.-</ecNumber>
    </recommendedName>
    <alternativeName>
        <fullName>Epoxide hydrolase</fullName>
        <ecNumber>3.3.2.10</ecNumber>
    </alternativeName>
    <alternativeName>
        <fullName>Leukotriene A-4 hydrolase homolog 2</fullName>
        <shortName>LTA-4 hydrolase 2</shortName>
    </alternativeName>
</protein>
<evidence type="ECO:0000250" key="1"/>
<evidence type="ECO:0000250" key="2">
    <source>
        <dbReference type="UniProtKB" id="Q10740"/>
    </source>
</evidence>
<evidence type="ECO:0000255" key="3">
    <source>
        <dbReference type="PROSITE-ProRule" id="PRU10095"/>
    </source>
</evidence>
<evidence type="ECO:0000305" key="4"/>
<accession>A3LQI7</accession>
<sequence length="635" mass="73074">MNVIKSRRPAVSPEIDPSTLSNYQNFAVSNTELFLDVLFDEKIVAGTVLYHLEVLNKDVSEVILDTSFLTVESVTVNGSEAEFSLHERVEPLGSRLAISIPPNSQKVQLFISFRTTERCTAIQFLDKEATDGKKAPYLFCQCQAIHARSLFPCFDTPALKSTYKLSAKSPLFTLMSGRPVNQEGDMYYFDQPVPIPSYLISIASGDIVKAKIGPRSDIYSEPVKIKDCQWEFENDMEDFIQIAEKLVFEYEWLRFDSLVLPSSFPYGGMEIPNLCQLTPTLICKDRSQVTVMAHELAHSWSGNLVTNCSWEHFWLNEGWTVYIERRIIEGIATAEAIKAGKKDPFAYGESMRHFSAIIGWNDLENSIKAMGNDAERFSPLVLDLKAGEDPDDSFSTVPYEKGFNLLFLIEQTVGGKKVFDKFIPSYFKKFRYGSLDTYQFVDYLYEFFNDKKVELDSIDWESWLYKPGMPPVMPKFDTTLADECYELADEWFSAIKNNSYLKHDFSSADIKSFEPNQSVVFLDTLISYNKHKDFNWKDHVDALKLMETAYTEYDTSLNAEILFRWYMLQVSGEREEFQHKLGQWLGTVGRMKFVRPGYVLLNEVNRELAIYYFKKFESNYHPICKTMVKKDLGLV</sequence>
<keyword id="KW-0963">Cytoplasm</keyword>
<keyword id="KW-0378">Hydrolase</keyword>
<keyword id="KW-0479">Metal-binding</keyword>
<keyword id="KW-0482">Metalloprotease</keyword>
<keyword id="KW-0539">Nucleus</keyword>
<keyword id="KW-0645">Protease</keyword>
<keyword id="KW-1185">Reference proteome</keyword>
<keyword id="KW-0862">Zinc</keyword>
<name>LKA42_PICST</name>
<proteinExistence type="inferred from homology"/>